<organism>
    <name type="scientific">Haemophilus influenzae (strain ATCC 51907 / DSM 11121 / KW20 / Rd)</name>
    <dbReference type="NCBI Taxonomy" id="71421"/>
    <lineage>
        <taxon>Bacteria</taxon>
        <taxon>Pseudomonadati</taxon>
        <taxon>Pseudomonadota</taxon>
        <taxon>Gammaproteobacteria</taxon>
        <taxon>Pasteurellales</taxon>
        <taxon>Pasteurellaceae</taxon>
        <taxon>Haemophilus</taxon>
    </lineage>
</organism>
<proteinExistence type="inferred from homology"/>
<comment type="function">
    <text evidence="1">Methylates the class 1 translation termination release factors RF1/PrfA and RF2/PrfB on the glutamine residue of the universally conserved GGQ motif.</text>
</comment>
<comment type="catalytic activity">
    <reaction evidence="1">
        <text>L-glutaminyl-[peptide chain release factor] + S-adenosyl-L-methionine = N(5)-methyl-L-glutaminyl-[peptide chain release factor] + S-adenosyl-L-homocysteine + H(+)</text>
        <dbReference type="Rhea" id="RHEA:42896"/>
        <dbReference type="Rhea" id="RHEA-COMP:10271"/>
        <dbReference type="Rhea" id="RHEA-COMP:10272"/>
        <dbReference type="ChEBI" id="CHEBI:15378"/>
        <dbReference type="ChEBI" id="CHEBI:30011"/>
        <dbReference type="ChEBI" id="CHEBI:57856"/>
        <dbReference type="ChEBI" id="CHEBI:59789"/>
        <dbReference type="ChEBI" id="CHEBI:61891"/>
        <dbReference type="EC" id="2.1.1.297"/>
    </reaction>
</comment>
<comment type="similarity">
    <text evidence="1">Belongs to the protein N5-glutamine methyltransferase family. PrmC subfamily.</text>
</comment>
<evidence type="ECO:0000255" key="1">
    <source>
        <dbReference type="HAMAP-Rule" id="MF_02126"/>
    </source>
</evidence>
<dbReference type="EC" id="2.1.1.297" evidence="1"/>
<dbReference type="EMBL" id="L42023">
    <property type="protein sequence ID" value="AAC23208.1"/>
    <property type="molecule type" value="Genomic_DNA"/>
</dbReference>
<dbReference type="PIR" id="H64129">
    <property type="entry name" value="H64129"/>
</dbReference>
<dbReference type="RefSeq" id="NP_439708.1">
    <property type="nucleotide sequence ID" value="NC_000907.1"/>
</dbReference>
<dbReference type="SMR" id="P45253"/>
<dbReference type="STRING" id="71421.HI_1559"/>
<dbReference type="EnsemblBacteria" id="AAC23208">
    <property type="protein sequence ID" value="AAC23208"/>
    <property type="gene ID" value="HI_1559"/>
</dbReference>
<dbReference type="KEGG" id="hin:HI_1559"/>
<dbReference type="PATRIC" id="fig|71421.8.peg.1630"/>
<dbReference type="eggNOG" id="COG2890">
    <property type="taxonomic scope" value="Bacteria"/>
</dbReference>
<dbReference type="HOGENOM" id="CLU_018398_3_0_6"/>
<dbReference type="OrthoDB" id="9800643at2"/>
<dbReference type="PhylomeDB" id="P45253"/>
<dbReference type="BioCyc" id="HINF71421:G1GJ1-1579-MONOMER"/>
<dbReference type="Proteomes" id="UP000000579">
    <property type="component" value="Chromosome"/>
</dbReference>
<dbReference type="GO" id="GO:0003676">
    <property type="term" value="F:nucleic acid binding"/>
    <property type="evidence" value="ECO:0007669"/>
    <property type="project" value="InterPro"/>
</dbReference>
<dbReference type="GO" id="GO:0102559">
    <property type="term" value="F:protein-(glutamine-N5) methyltransferase activity"/>
    <property type="evidence" value="ECO:0007669"/>
    <property type="project" value="UniProtKB-EC"/>
</dbReference>
<dbReference type="GO" id="GO:0036009">
    <property type="term" value="F:protein-glutamine N-methyltransferase activity"/>
    <property type="evidence" value="ECO:0000318"/>
    <property type="project" value="GO_Central"/>
</dbReference>
<dbReference type="GO" id="GO:0032259">
    <property type="term" value="P:methylation"/>
    <property type="evidence" value="ECO:0007669"/>
    <property type="project" value="UniProtKB-KW"/>
</dbReference>
<dbReference type="GO" id="GO:0006415">
    <property type="term" value="P:translational termination"/>
    <property type="evidence" value="ECO:0000318"/>
    <property type="project" value="GO_Central"/>
</dbReference>
<dbReference type="CDD" id="cd02440">
    <property type="entry name" value="AdoMet_MTases"/>
    <property type="match status" value="1"/>
</dbReference>
<dbReference type="FunFam" id="1.10.8.10:FF:000032">
    <property type="entry name" value="Release factor glutamine methyltransferase"/>
    <property type="match status" value="1"/>
</dbReference>
<dbReference type="FunFam" id="3.40.50.150:FF:000053">
    <property type="entry name" value="Release factor glutamine methyltransferase"/>
    <property type="match status" value="1"/>
</dbReference>
<dbReference type="Gene3D" id="1.10.8.10">
    <property type="entry name" value="DNA helicase RuvA subunit, C-terminal domain"/>
    <property type="match status" value="1"/>
</dbReference>
<dbReference type="Gene3D" id="3.40.50.150">
    <property type="entry name" value="Vaccinia Virus protein VP39"/>
    <property type="match status" value="1"/>
</dbReference>
<dbReference type="HAMAP" id="MF_02126">
    <property type="entry name" value="RF_methyltr_PrmC"/>
    <property type="match status" value="1"/>
</dbReference>
<dbReference type="InterPro" id="IPR002052">
    <property type="entry name" value="DNA_methylase_N6_adenine_CS"/>
</dbReference>
<dbReference type="InterPro" id="IPR004556">
    <property type="entry name" value="HemK-like"/>
</dbReference>
<dbReference type="InterPro" id="IPR025714">
    <property type="entry name" value="Methyltranfer_dom"/>
</dbReference>
<dbReference type="InterPro" id="IPR050320">
    <property type="entry name" value="N5-glutamine_MTase"/>
</dbReference>
<dbReference type="InterPro" id="IPR040758">
    <property type="entry name" value="PrmC_N"/>
</dbReference>
<dbReference type="InterPro" id="IPR019874">
    <property type="entry name" value="RF_methyltr_PrmC"/>
</dbReference>
<dbReference type="InterPro" id="IPR029063">
    <property type="entry name" value="SAM-dependent_MTases_sf"/>
</dbReference>
<dbReference type="NCBIfam" id="TIGR00536">
    <property type="entry name" value="hemK_fam"/>
    <property type="match status" value="1"/>
</dbReference>
<dbReference type="NCBIfam" id="TIGR03534">
    <property type="entry name" value="RF_mod_PrmC"/>
    <property type="match status" value="1"/>
</dbReference>
<dbReference type="PANTHER" id="PTHR18895">
    <property type="entry name" value="HEMK METHYLTRANSFERASE"/>
    <property type="match status" value="1"/>
</dbReference>
<dbReference type="PANTHER" id="PTHR18895:SF74">
    <property type="entry name" value="MTRF1L RELEASE FACTOR GLUTAMINE METHYLTRANSFERASE"/>
    <property type="match status" value="1"/>
</dbReference>
<dbReference type="Pfam" id="PF13847">
    <property type="entry name" value="Methyltransf_31"/>
    <property type="match status" value="1"/>
</dbReference>
<dbReference type="Pfam" id="PF17827">
    <property type="entry name" value="PrmC_N"/>
    <property type="match status" value="1"/>
</dbReference>
<dbReference type="SUPFAM" id="SSF53335">
    <property type="entry name" value="S-adenosyl-L-methionine-dependent methyltransferases"/>
    <property type="match status" value="1"/>
</dbReference>
<feature type="chain" id="PRO_0000157164" description="Release factor glutamine methyltransferase">
    <location>
        <begin position="1"/>
        <end position="292"/>
    </location>
</feature>
<feature type="binding site" evidence="1">
    <location>
        <begin position="126"/>
        <end position="130"/>
    </location>
    <ligand>
        <name>S-adenosyl-L-methionine</name>
        <dbReference type="ChEBI" id="CHEBI:59789"/>
    </ligand>
</feature>
<feature type="binding site" evidence="1">
    <location>
        <position position="157"/>
    </location>
    <ligand>
        <name>S-adenosyl-L-methionine</name>
        <dbReference type="ChEBI" id="CHEBI:59789"/>
    </ligand>
</feature>
<feature type="binding site" evidence="1">
    <location>
        <position position="184"/>
    </location>
    <ligand>
        <name>S-adenosyl-L-methionine</name>
        <dbReference type="ChEBI" id="CHEBI:59789"/>
    </ligand>
</feature>
<feature type="binding site" evidence="1">
    <location>
        <begin position="198"/>
        <end position="201"/>
    </location>
    <ligand>
        <name>substrate</name>
    </ligand>
</feature>
<feature type="binding site" evidence="1">
    <location>
        <position position="198"/>
    </location>
    <ligand>
        <name>S-adenosyl-L-methionine</name>
        <dbReference type="ChEBI" id="CHEBI:59789"/>
    </ligand>
</feature>
<protein>
    <recommendedName>
        <fullName evidence="1">Release factor glutamine methyltransferase</fullName>
        <shortName evidence="1">RF MTase</shortName>
        <ecNumber evidence="1">2.1.1.297</ecNumber>
    </recommendedName>
    <alternativeName>
        <fullName>M.HindHemKP</fullName>
    </alternativeName>
    <alternativeName>
        <fullName evidence="1">N5-glutamine methyltransferase PrmC</fullName>
    </alternativeName>
    <alternativeName>
        <fullName evidence="1">Protein-(glutamine-N5) MTase PrmC</fullName>
    </alternativeName>
    <alternativeName>
        <fullName evidence="1">Protein-glutamine N-methyltransferase PrmC</fullName>
    </alternativeName>
</protein>
<accession>P45253</accession>
<keyword id="KW-0489">Methyltransferase</keyword>
<keyword id="KW-1185">Reference proteome</keyword>
<keyword id="KW-0949">S-adenosyl-L-methionine</keyword>
<keyword id="KW-0808">Transferase</keyword>
<sequence length="292" mass="33055">MNYKEWLAQAIADLAKKNPTENSKIDALVLLQHATGKSRTQILAFDDTEIDEKVRLKLTALLDRRLKGEPIAYILGEKEFWSLPLNVSKGTLIPRPDTEILVEKALQIALEKLEENPPHFRILDLGTGTGAIALALASELAPICQKRHIPLEIIGVDLMSDVVALAQSNAERNQLNVEFLQSRWFDNITGKFDLIVSNPPYIDAQDEHLHQGDVRFEPLSALVANDEGYADLRHIIELASSYLNSNGVLLLEHGWQQGEKVRSIFQENHWEMVETVRDYSDNERVTLGFWKK</sequence>
<reference key="1">
    <citation type="journal article" date="1995" name="Science">
        <title>Whole-genome random sequencing and assembly of Haemophilus influenzae Rd.</title>
        <authorList>
            <person name="Fleischmann R.D."/>
            <person name="Adams M.D."/>
            <person name="White O."/>
            <person name="Clayton R.A."/>
            <person name="Kirkness E.F."/>
            <person name="Kerlavage A.R."/>
            <person name="Bult C.J."/>
            <person name="Tomb J.-F."/>
            <person name="Dougherty B.A."/>
            <person name="Merrick J.M."/>
            <person name="McKenney K."/>
            <person name="Sutton G.G."/>
            <person name="FitzHugh W."/>
            <person name="Fields C.A."/>
            <person name="Gocayne J.D."/>
            <person name="Scott J.D."/>
            <person name="Shirley R."/>
            <person name="Liu L.-I."/>
            <person name="Glodek A."/>
            <person name="Kelley J.M."/>
            <person name="Weidman J.F."/>
            <person name="Phillips C.A."/>
            <person name="Spriggs T."/>
            <person name="Hedblom E."/>
            <person name="Cotton M.D."/>
            <person name="Utterback T.R."/>
            <person name="Hanna M.C."/>
            <person name="Nguyen D.T."/>
            <person name="Saudek D.M."/>
            <person name="Brandon R.C."/>
            <person name="Fine L.D."/>
            <person name="Fritchman J.L."/>
            <person name="Fuhrmann J.L."/>
            <person name="Geoghagen N.S.M."/>
            <person name="Gnehm C.L."/>
            <person name="McDonald L.A."/>
            <person name="Small K.V."/>
            <person name="Fraser C.M."/>
            <person name="Smith H.O."/>
            <person name="Venter J.C."/>
        </authorList>
    </citation>
    <scope>NUCLEOTIDE SEQUENCE [LARGE SCALE GENOMIC DNA]</scope>
    <source>
        <strain>ATCC 51907 / DSM 11121 / KW20 / Rd</strain>
    </source>
</reference>
<gene>
    <name evidence="1" type="primary">prmC</name>
    <name type="synonym">hemK</name>
    <name type="ordered locus">HI_1559</name>
</gene>
<name>PRMC_HAEIN</name>